<dbReference type="EMBL" id="CP000440">
    <property type="protein sequence ID" value="ABI85858.1"/>
    <property type="molecule type" value="Genomic_DNA"/>
</dbReference>
<dbReference type="SMR" id="Q0BJ15"/>
<dbReference type="KEGG" id="bam:Bamb_0298"/>
<dbReference type="PATRIC" id="fig|339670.21.peg.1322"/>
<dbReference type="eggNOG" id="COG0218">
    <property type="taxonomic scope" value="Bacteria"/>
</dbReference>
<dbReference type="Proteomes" id="UP000000662">
    <property type="component" value="Chromosome 1"/>
</dbReference>
<dbReference type="GO" id="GO:0005829">
    <property type="term" value="C:cytosol"/>
    <property type="evidence" value="ECO:0007669"/>
    <property type="project" value="TreeGrafter"/>
</dbReference>
<dbReference type="GO" id="GO:0005525">
    <property type="term" value="F:GTP binding"/>
    <property type="evidence" value="ECO:0007669"/>
    <property type="project" value="UniProtKB-UniRule"/>
</dbReference>
<dbReference type="GO" id="GO:0046872">
    <property type="term" value="F:metal ion binding"/>
    <property type="evidence" value="ECO:0007669"/>
    <property type="project" value="UniProtKB-KW"/>
</dbReference>
<dbReference type="GO" id="GO:0000917">
    <property type="term" value="P:division septum assembly"/>
    <property type="evidence" value="ECO:0007669"/>
    <property type="project" value="UniProtKB-KW"/>
</dbReference>
<dbReference type="CDD" id="cd01876">
    <property type="entry name" value="YihA_EngB"/>
    <property type="match status" value="1"/>
</dbReference>
<dbReference type="FunFam" id="3.40.50.300:FF:000098">
    <property type="entry name" value="Probable GTP-binding protein EngB"/>
    <property type="match status" value="1"/>
</dbReference>
<dbReference type="Gene3D" id="3.40.50.300">
    <property type="entry name" value="P-loop containing nucleotide triphosphate hydrolases"/>
    <property type="match status" value="1"/>
</dbReference>
<dbReference type="HAMAP" id="MF_00321">
    <property type="entry name" value="GTPase_EngB"/>
    <property type="match status" value="1"/>
</dbReference>
<dbReference type="InterPro" id="IPR030393">
    <property type="entry name" value="G_ENGB_dom"/>
</dbReference>
<dbReference type="InterPro" id="IPR006073">
    <property type="entry name" value="GTP-bd"/>
</dbReference>
<dbReference type="InterPro" id="IPR019987">
    <property type="entry name" value="GTP-bd_ribosome_bio_YsxC"/>
</dbReference>
<dbReference type="InterPro" id="IPR027417">
    <property type="entry name" value="P-loop_NTPase"/>
</dbReference>
<dbReference type="NCBIfam" id="TIGR03598">
    <property type="entry name" value="GTPase_YsxC"/>
    <property type="match status" value="1"/>
</dbReference>
<dbReference type="PANTHER" id="PTHR11649:SF13">
    <property type="entry name" value="ENGB-TYPE G DOMAIN-CONTAINING PROTEIN"/>
    <property type="match status" value="1"/>
</dbReference>
<dbReference type="PANTHER" id="PTHR11649">
    <property type="entry name" value="MSS1/TRME-RELATED GTP-BINDING PROTEIN"/>
    <property type="match status" value="1"/>
</dbReference>
<dbReference type="Pfam" id="PF01926">
    <property type="entry name" value="MMR_HSR1"/>
    <property type="match status" value="1"/>
</dbReference>
<dbReference type="SUPFAM" id="SSF52540">
    <property type="entry name" value="P-loop containing nucleoside triphosphate hydrolases"/>
    <property type="match status" value="1"/>
</dbReference>
<dbReference type="PROSITE" id="PS51706">
    <property type="entry name" value="G_ENGB"/>
    <property type="match status" value="1"/>
</dbReference>
<gene>
    <name evidence="1" type="primary">engB</name>
    <name type="ordered locus">Bamb_0298</name>
</gene>
<organism>
    <name type="scientific">Burkholderia ambifaria (strain ATCC BAA-244 / DSM 16087 / CCUG 44356 / LMG 19182 / AMMD)</name>
    <name type="common">Burkholderia cepacia (strain AMMD)</name>
    <dbReference type="NCBI Taxonomy" id="339670"/>
    <lineage>
        <taxon>Bacteria</taxon>
        <taxon>Pseudomonadati</taxon>
        <taxon>Pseudomonadota</taxon>
        <taxon>Betaproteobacteria</taxon>
        <taxon>Burkholderiales</taxon>
        <taxon>Burkholderiaceae</taxon>
        <taxon>Burkholderia</taxon>
        <taxon>Burkholderia cepacia complex</taxon>
    </lineage>
</organism>
<accession>Q0BJ15</accession>
<comment type="function">
    <text evidence="1">Necessary for normal cell division and for the maintenance of normal septation.</text>
</comment>
<comment type="cofactor">
    <cofactor evidence="1">
        <name>Mg(2+)</name>
        <dbReference type="ChEBI" id="CHEBI:18420"/>
    </cofactor>
</comment>
<comment type="similarity">
    <text evidence="1">Belongs to the TRAFAC class TrmE-Era-EngA-EngB-Septin-like GTPase superfamily. EngB GTPase family.</text>
</comment>
<feature type="chain" id="PRO_1000005803" description="Probable GTP-binding protein EngB">
    <location>
        <begin position="1"/>
        <end position="219"/>
    </location>
</feature>
<feature type="domain" description="EngB-type G" evidence="1">
    <location>
        <begin position="24"/>
        <end position="207"/>
    </location>
</feature>
<feature type="binding site" evidence="1">
    <location>
        <begin position="32"/>
        <end position="39"/>
    </location>
    <ligand>
        <name>GTP</name>
        <dbReference type="ChEBI" id="CHEBI:37565"/>
    </ligand>
</feature>
<feature type="binding site" evidence="1">
    <location>
        <position position="39"/>
    </location>
    <ligand>
        <name>Mg(2+)</name>
        <dbReference type="ChEBI" id="CHEBI:18420"/>
    </ligand>
</feature>
<feature type="binding site" evidence="1">
    <location>
        <begin position="59"/>
        <end position="63"/>
    </location>
    <ligand>
        <name>GTP</name>
        <dbReference type="ChEBI" id="CHEBI:37565"/>
    </ligand>
</feature>
<feature type="binding site" evidence="1">
    <location>
        <position position="61"/>
    </location>
    <ligand>
        <name>Mg(2+)</name>
        <dbReference type="ChEBI" id="CHEBI:18420"/>
    </ligand>
</feature>
<feature type="binding site" evidence="1">
    <location>
        <begin position="81"/>
        <end position="84"/>
    </location>
    <ligand>
        <name>GTP</name>
        <dbReference type="ChEBI" id="CHEBI:37565"/>
    </ligand>
</feature>
<feature type="binding site" evidence="1">
    <location>
        <begin position="148"/>
        <end position="151"/>
    </location>
    <ligand>
        <name>GTP</name>
        <dbReference type="ChEBI" id="CHEBI:37565"/>
    </ligand>
</feature>
<feature type="binding site" evidence="1">
    <location>
        <begin position="186"/>
        <end position="188"/>
    </location>
    <ligand>
        <name>GTP</name>
        <dbReference type="ChEBI" id="CHEBI:37565"/>
    </ligand>
</feature>
<protein>
    <recommendedName>
        <fullName evidence="1">Probable GTP-binding protein EngB</fullName>
    </recommendedName>
</protein>
<proteinExistence type="inferred from homology"/>
<name>ENGB_BURCM</name>
<reference key="1">
    <citation type="submission" date="2006-08" db="EMBL/GenBank/DDBJ databases">
        <title>Complete sequence of chromosome 1 of Burkholderia cepacia AMMD.</title>
        <authorList>
            <person name="Copeland A."/>
            <person name="Lucas S."/>
            <person name="Lapidus A."/>
            <person name="Barry K."/>
            <person name="Detter J.C."/>
            <person name="Glavina del Rio T."/>
            <person name="Hammon N."/>
            <person name="Israni S."/>
            <person name="Pitluck S."/>
            <person name="Bruce D."/>
            <person name="Chain P."/>
            <person name="Malfatti S."/>
            <person name="Shin M."/>
            <person name="Vergez L."/>
            <person name="Schmutz J."/>
            <person name="Larimer F."/>
            <person name="Land M."/>
            <person name="Hauser L."/>
            <person name="Kyrpides N."/>
            <person name="Kim E."/>
            <person name="Parke J."/>
            <person name="Coenye T."/>
            <person name="Konstantinidis K."/>
            <person name="Ramette A."/>
            <person name="Tiedje J."/>
            <person name="Richardson P."/>
        </authorList>
    </citation>
    <scope>NUCLEOTIDE SEQUENCE [LARGE SCALE GENOMIC DNA]</scope>
    <source>
        <strain>ATCC BAA-244 / DSM 16087 / CCUG 44356 / LMG 19182 / AMMD</strain>
    </source>
</reference>
<sequence length="219" mass="24387">MAFLLHQARFYTTVNHLRDLPPTVQPEIAFAGRSNAGKSTAINVLCNQKRLAFASKTPGRTQHINYFSVGPAAEPVANLVDLPGYGYAEVPGAAKAHWEMLLSSYLATRSQLCGLILMMDSRRPLTDLDRRMIEWFVPTGKPIHTLLTKCDKLTRQESINALRNTQKGLDAYRDQGVKGKLTVQLFSALKRTGLDEAHELIESWLRPSVADEKSEPVAQ</sequence>
<evidence type="ECO:0000255" key="1">
    <source>
        <dbReference type="HAMAP-Rule" id="MF_00321"/>
    </source>
</evidence>
<keyword id="KW-0131">Cell cycle</keyword>
<keyword id="KW-0132">Cell division</keyword>
<keyword id="KW-0342">GTP-binding</keyword>
<keyword id="KW-0460">Magnesium</keyword>
<keyword id="KW-0479">Metal-binding</keyword>
<keyword id="KW-0547">Nucleotide-binding</keyword>
<keyword id="KW-0717">Septation</keyword>